<proteinExistence type="inferred from homology"/>
<name>SYM_STAHJ</name>
<gene>
    <name evidence="1" type="primary">metG</name>
    <name type="ordered locus">SH2521</name>
</gene>
<comment type="function">
    <text evidence="1">Is required not only for elongation of protein synthesis but also for the initiation of all mRNA translation through initiator tRNA(fMet) aminoacylation.</text>
</comment>
<comment type="catalytic activity">
    <reaction evidence="1">
        <text>tRNA(Met) + L-methionine + ATP = L-methionyl-tRNA(Met) + AMP + diphosphate</text>
        <dbReference type="Rhea" id="RHEA:13481"/>
        <dbReference type="Rhea" id="RHEA-COMP:9667"/>
        <dbReference type="Rhea" id="RHEA-COMP:9698"/>
        <dbReference type="ChEBI" id="CHEBI:30616"/>
        <dbReference type="ChEBI" id="CHEBI:33019"/>
        <dbReference type="ChEBI" id="CHEBI:57844"/>
        <dbReference type="ChEBI" id="CHEBI:78442"/>
        <dbReference type="ChEBI" id="CHEBI:78530"/>
        <dbReference type="ChEBI" id="CHEBI:456215"/>
        <dbReference type="EC" id="6.1.1.10"/>
    </reaction>
</comment>
<comment type="subunit">
    <text evidence="1">Homodimer.</text>
</comment>
<comment type="subcellular location">
    <subcellularLocation>
        <location evidence="1">Cytoplasm</location>
    </subcellularLocation>
</comment>
<comment type="similarity">
    <text evidence="1">Belongs to the class-I aminoacyl-tRNA synthetase family. MetG type 2B subfamily.</text>
</comment>
<protein>
    <recommendedName>
        <fullName evidence="1">Methionine--tRNA ligase</fullName>
        <ecNumber evidence="1">6.1.1.10</ecNumber>
    </recommendedName>
    <alternativeName>
        <fullName evidence="1">Methionyl-tRNA synthetase</fullName>
        <shortName evidence="1">MetRS</shortName>
    </alternativeName>
</protein>
<feature type="chain" id="PRO_0000139247" description="Methionine--tRNA ligase">
    <location>
        <begin position="1"/>
        <end position="659"/>
    </location>
</feature>
<feature type="domain" description="tRNA-binding" evidence="1">
    <location>
        <begin position="559"/>
        <end position="659"/>
    </location>
</feature>
<feature type="short sequence motif" description="'HIGH' region">
    <location>
        <begin position="13"/>
        <end position="23"/>
    </location>
</feature>
<feature type="short sequence motif" description="'KMSKS' region">
    <location>
        <begin position="308"/>
        <end position="312"/>
    </location>
</feature>
<feature type="binding site" evidence="1">
    <location>
        <position position="311"/>
    </location>
    <ligand>
        <name>ATP</name>
        <dbReference type="ChEBI" id="CHEBI:30616"/>
    </ligand>
</feature>
<dbReference type="EC" id="6.1.1.10" evidence="1"/>
<dbReference type="EMBL" id="AP006716">
    <property type="protein sequence ID" value="BAE05830.1"/>
    <property type="molecule type" value="Genomic_DNA"/>
</dbReference>
<dbReference type="RefSeq" id="WP_011276771.1">
    <property type="nucleotide sequence ID" value="NC_007168.1"/>
</dbReference>
<dbReference type="SMR" id="Q4L3E7"/>
<dbReference type="GeneID" id="93781750"/>
<dbReference type="KEGG" id="sha:SH2521"/>
<dbReference type="eggNOG" id="COG0073">
    <property type="taxonomic scope" value="Bacteria"/>
</dbReference>
<dbReference type="eggNOG" id="COG0143">
    <property type="taxonomic scope" value="Bacteria"/>
</dbReference>
<dbReference type="HOGENOM" id="CLU_009710_9_4_9"/>
<dbReference type="OrthoDB" id="9810191at2"/>
<dbReference type="Proteomes" id="UP000000543">
    <property type="component" value="Chromosome"/>
</dbReference>
<dbReference type="GO" id="GO:0005737">
    <property type="term" value="C:cytoplasm"/>
    <property type="evidence" value="ECO:0007669"/>
    <property type="project" value="UniProtKB-SubCell"/>
</dbReference>
<dbReference type="GO" id="GO:0005524">
    <property type="term" value="F:ATP binding"/>
    <property type="evidence" value="ECO:0007669"/>
    <property type="project" value="UniProtKB-UniRule"/>
</dbReference>
<dbReference type="GO" id="GO:0004825">
    <property type="term" value="F:methionine-tRNA ligase activity"/>
    <property type="evidence" value="ECO:0007669"/>
    <property type="project" value="UniProtKB-UniRule"/>
</dbReference>
<dbReference type="GO" id="GO:0000049">
    <property type="term" value="F:tRNA binding"/>
    <property type="evidence" value="ECO:0007669"/>
    <property type="project" value="UniProtKB-KW"/>
</dbReference>
<dbReference type="GO" id="GO:0006431">
    <property type="term" value="P:methionyl-tRNA aminoacylation"/>
    <property type="evidence" value="ECO:0007669"/>
    <property type="project" value="UniProtKB-UniRule"/>
</dbReference>
<dbReference type="CDD" id="cd07957">
    <property type="entry name" value="Anticodon_Ia_Met"/>
    <property type="match status" value="1"/>
</dbReference>
<dbReference type="CDD" id="cd00814">
    <property type="entry name" value="MetRS_core"/>
    <property type="match status" value="1"/>
</dbReference>
<dbReference type="CDD" id="cd02800">
    <property type="entry name" value="tRNA_bind_EcMetRS_like"/>
    <property type="match status" value="1"/>
</dbReference>
<dbReference type="FunFam" id="1.10.730.10:FF:000026">
    <property type="entry name" value="Methionine--tRNA ligase"/>
    <property type="match status" value="1"/>
</dbReference>
<dbReference type="FunFam" id="2.170.220.10:FF:000002">
    <property type="entry name" value="Methionine--tRNA ligase"/>
    <property type="match status" value="1"/>
</dbReference>
<dbReference type="FunFam" id="2.40.50.140:FF:000042">
    <property type="entry name" value="Methionine--tRNA ligase"/>
    <property type="match status" value="1"/>
</dbReference>
<dbReference type="Gene3D" id="2.170.220.10">
    <property type="match status" value="1"/>
</dbReference>
<dbReference type="Gene3D" id="3.40.50.620">
    <property type="entry name" value="HUPs"/>
    <property type="match status" value="1"/>
</dbReference>
<dbReference type="Gene3D" id="1.10.730.10">
    <property type="entry name" value="Isoleucyl-tRNA Synthetase, Domain 1"/>
    <property type="match status" value="1"/>
</dbReference>
<dbReference type="Gene3D" id="2.40.50.140">
    <property type="entry name" value="Nucleic acid-binding proteins"/>
    <property type="match status" value="1"/>
</dbReference>
<dbReference type="HAMAP" id="MF_01228">
    <property type="entry name" value="Met_tRNA_synth_type2"/>
    <property type="match status" value="1"/>
</dbReference>
<dbReference type="InterPro" id="IPR001412">
    <property type="entry name" value="aa-tRNA-synth_I_CS"/>
</dbReference>
<dbReference type="InterPro" id="IPR041872">
    <property type="entry name" value="Anticodon_Met"/>
</dbReference>
<dbReference type="InterPro" id="IPR013155">
    <property type="entry name" value="M/V/L/I-tRNA-synth_anticd-bd"/>
</dbReference>
<dbReference type="InterPro" id="IPR004495">
    <property type="entry name" value="Met-tRNA-synth_bsu_C"/>
</dbReference>
<dbReference type="InterPro" id="IPR014758">
    <property type="entry name" value="Met-tRNA_synth"/>
</dbReference>
<dbReference type="InterPro" id="IPR023457">
    <property type="entry name" value="Met-tRNA_synth_2"/>
</dbReference>
<dbReference type="InterPro" id="IPR015413">
    <property type="entry name" value="Methionyl/Leucyl_tRNA_Synth"/>
</dbReference>
<dbReference type="InterPro" id="IPR033911">
    <property type="entry name" value="MetRS_core"/>
</dbReference>
<dbReference type="InterPro" id="IPR012340">
    <property type="entry name" value="NA-bd_OB-fold"/>
</dbReference>
<dbReference type="InterPro" id="IPR014729">
    <property type="entry name" value="Rossmann-like_a/b/a_fold"/>
</dbReference>
<dbReference type="InterPro" id="IPR002547">
    <property type="entry name" value="tRNA-bd_dom"/>
</dbReference>
<dbReference type="InterPro" id="IPR009080">
    <property type="entry name" value="tRNAsynth_Ia_anticodon-bd"/>
</dbReference>
<dbReference type="NCBIfam" id="TIGR00398">
    <property type="entry name" value="metG"/>
    <property type="match status" value="1"/>
</dbReference>
<dbReference type="NCBIfam" id="TIGR00399">
    <property type="entry name" value="metG_C_term"/>
    <property type="match status" value="1"/>
</dbReference>
<dbReference type="NCBIfam" id="NF008900">
    <property type="entry name" value="PRK12267.1"/>
    <property type="match status" value="1"/>
</dbReference>
<dbReference type="PANTHER" id="PTHR43326:SF1">
    <property type="entry name" value="METHIONINE--TRNA LIGASE, MITOCHONDRIAL"/>
    <property type="match status" value="1"/>
</dbReference>
<dbReference type="PANTHER" id="PTHR43326">
    <property type="entry name" value="METHIONYL-TRNA SYNTHETASE"/>
    <property type="match status" value="1"/>
</dbReference>
<dbReference type="Pfam" id="PF08264">
    <property type="entry name" value="Anticodon_1"/>
    <property type="match status" value="1"/>
</dbReference>
<dbReference type="Pfam" id="PF09334">
    <property type="entry name" value="tRNA-synt_1g"/>
    <property type="match status" value="1"/>
</dbReference>
<dbReference type="Pfam" id="PF01588">
    <property type="entry name" value="tRNA_bind"/>
    <property type="match status" value="1"/>
</dbReference>
<dbReference type="PRINTS" id="PR01041">
    <property type="entry name" value="TRNASYNTHMET"/>
</dbReference>
<dbReference type="SUPFAM" id="SSF47323">
    <property type="entry name" value="Anticodon-binding domain of a subclass of class I aminoacyl-tRNA synthetases"/>
    <property type="match status" value="1"/>
</dbReference>
<dbReference type="SUPFAM" id="SSF50249">
    <property type="entry name" value="Nucleic acid-binding proteins"/>
    <property type="match status" value="1"/>
</dbReference>
<dbReference type="SUPFAM" id="SSF52374">
    <property type="entry name" value="Nucleotidylyl transferase"/>
    <property type="match status" value="1"/>
</dbReference>
<dbReference type="PROSITE" id="PS00178">
    <property type="entry name" value="AA_TRNA_LIGASE_I"/>
    <property type="match status" value="1"/>
</dbReference>
<dbReference type="PROSITE" id="PS50886">
    <property type="entry name" value="TRBD"/>
    <property type="match status" value="1"/>
</dbReference>
<organism>
    <name type="scientific">Staphylococcus haemolyticus (strain JCSC1435)</name>
    <dbReference type="NCBI Taxonomy" id="279808"/>
    <lineage>
        <taxon>Bacteria</taxon>
        <taxon>Bacillati</taxon>
        <taxon>Bacillota</taxon>
        <taxon>Bacilli</taxon>
        <taxon>Bacillales</taxon>
        <taxon>Staphylococcaceae</taxon>
        <taxon>Staphylococcus</taxon>
    </lineage>
</organism>
<accession>Q4L3E7</accession>
<reference key="1">
    <citation type="journal article" date="2005" name="J. Bacteriol.">
        <title>Whole-genome sequencing of Staphylococcus haemolyticus uncovers the extreme plasticity of its genome and the evolution of human-colonizing staphylococcal species.</title>
        <authorList>
            <person name="Takeuchi F."/>
            <person name="Watanabe S."/>
            <person name="Baba T."/>
            <person name="Yuzawa H."/>
            <person name="Ito T."/>
            <person name="Morimoto Y."/>
            <person name="Kuroda M."/>
            <person name="Cui L."/>
            <person name="Takahashi M."/>
            <person name="Ankai A."/>
            <person name="Baba S."/>
            <person name="Fukui S."/>
            <person name="Lee J.C."/>
            <person name="Hiramatsu K."/>
        </authorList>
    </citation>
    <scope>NUCLEOTIDE SEQUENCE [LARGE SCALE GENOMIC DNA]</scope>
    <source>
        <strain>JCSC1435</strain>
    </source>
</reference>
<sequence>MAKETFYITTPIYYPSGNLHIGHAYSTVAGDVISRYKRMQGYDVRYLTGTDEHGQKIQEKAQKAGKTELEYLDEMISGIKSLWSKLEISNDDFIRTTEDRHKQVVEKVFERLLKQGDIYLGEYEGWYSVPDETYYTESQLVDPIYENGKIVGGKSPDSGHEVELVKEESYFFNINKYTDRLLEFYDANPDFIQPPSRKNEMINNFIKPGLEDLAVSRTSFDWGVRVPSNPKHVVYVWIDALVNYISALGYLSDDDELFQKYWPADVHLMAKEIVRFHSIIWPILLMALDLPLPKKVFAHGWILMKDGKMSKSKGNVVDPNVLIDRYGLDATRYYLMRELPFGSDGVFTPEAFVERTNYDLANDLGNLVNRTISMINKYFQGELPAYEGPKHELDEDMEALAHETVKHFNESMESFQFSVALSTVWKFISRTNKYIDETTPWVLAKDDSQKDMLGNVMAHLVENIRFAAVLLRPFLTHAPKEIFKQLNINEPELFELESLEQYGALKQPIMVTEKPTPIFPRLDTEAEIAYIKESMQPPKSEESKDEVEEPSKAQIDIKDFDKVEIKAATITDAENVPKSDKLLKIQIDLGLEQRQIVSGIAKFYRPEDIIGKKVAVVTNLKPAKLMGQKSEGMILSAEKDGVLTLVSLPSAIPNGAVIK</sequence>
<evidence type="ECO:0000255" key="1">
    <source>
        <dbReference type="HAMAP-Rule" id="MF_01228"/>
    </source>
</evidence>
<keyword id="KW-0030">Aminoacyl-tRNA synthetase</keyword>
<keyword id="KW-0067">ATP-binding</keyword>
<keyword id="KW-0963">Cytoplasm</keyword>
<keyword id="KW-0436">Ligase</keyword>
<keyword id="KW-0547">Nucleotide-binding</keyword>
<keyword id="KW-0648">Protein biosynthesis</keyword>
<keyword id="KW-0694">RNA-binding</keyword>
<keyword id="KW-0820">tRNA-binding</keyword>